<proteinExistence type="evidence at transcript level"/>
<dbReference type="EC" id="3.1.27.-" evidence="1"/>
<dbReference type="EMBL" id="BC100188">
    <property type="protein sequence ID" value="AAI00189.1"/>
    <property type="status" value="ALT_INIT"/>
    <property type="molecule type" value="mRNA"/>
</dbReference>
<dbReference type="SMR" id="Q498J9"/>
<dbReference type="Proteomes" id="UP000186698">
    <property type="component" value="Unplaced"/>
</dbReference>
<dbReference type="GO" id="GO:0005737">
    <property type="term" value="C:cytoplasm"/>
    <property type="evidence" value="ECO:0000250"/>
    <property type="project" value="UniProtKB"/>
</dbReference>
<dbReference type="GO" id="GO:0005829">
    <property type="term" value="C:cytosol"/>
    <property type="evidence" value="ECO:0007669"/>
    <property type="project" value="UniProtKB-SubCell"/>
</dbReference>
<dbReference type="GO" id="GO:0005634">
    <property type="term" value="C:nucleus"/>
    <property type="evidence" value="ECO:0000250"/>
    <property type="project" value="UniProtKB"/>
</dbReference>
<dbReference type="GO" id="GO:0046872">
    <property type="term" value="F:metal ion binding"/>
    <property type="evidence" value="ECO:0000250"/>
    <property type="project" value="UniProtKB"/>
</dbReference>
<dbReference type="GO" id="GO:0004521">
    <property type="term" value="F:RNA endonuclease activity"/>
    <property type="evidence" value="ECO:0000250"/>
    <property type="project" value="UniProtKB"/>
</dbReference>
<dbReference type="GO" id="GO:0008334">
    <property type="term" value="P:histone mRNA metabolic process"/>
    <property type="evidence" value="ECO:0000250"/>
    <property type="project" value="UniProtKB"/>
</dbReference>
<dbReference type="GO" id="GO:1900087">
    <property type="term" value="P:positive regulation of G1/S transition of mitotic cell cycle"/>
    <property type="evidence" value="ECO:0000250"/>
    <property type="project" value="UniProtKB"/>
</dbReference>
<dbReference type="CDD" id="cd07711">
    <property type="entry name" value="MBLAC1-like_MBL-fold"/>
    <property type="match status" value="1"/>
</dbReference>
<dbReference type="Gene3D" id="3.60.15.10">
    <property type="entry name" value="Ribonuclease Z/Hydroxyacylglutathione hydrolase-like"/>
    <property type="match status" value="1"/>
</dbReference>
<dbReference type="InterPro" id="IPR039344">
    <property type="entry name" value="MBLAC1"/>
</dbReference>
<dbReference type="InterPro" id="IPR001279">
    <property type="entry name" value="Metallo-B-lactamas"/>
</dbReference>
<dbReference type="InterPro" id="IPR036866">
    <property type="entry name" value="RibonucZ/Hydroxyglut_hydro"/>
</dbReference>
<dbReference type="PANTHER" id="PTHR23200">
    <property type="entry name" value="METALLO-BETA-LACTAMASE DOMAIN-CONTAINING PROTEIN 1"/>
    <property type="match status" value="1"/>
</dbReference>
<dbReference type="PANTHER" id="PTHR23200:SF48">
    <property type="entry name" value="METALLO-BETA-LACTAMASE DOMAIN-CONTAINING PROTEIN 1"/>
    <property type="match status" value="1"/>
</dbReference>
<dbReference type="Pfam" id="PF00753">
    <property type="entry name" value="Lactamase_B"/>
    <property type="match status" value="1"/>
</dbReference>
<dbReference type="SMART" id="SM00849">
    <property type="entry name" value="Lactamase_B"/>
    <property type="match status" value="1"/>
</dbReference>
<dbReference type="SUPFAM" id="SSF56281">
    <property type="entry name" value="Metallo-hydrolase/oxidoreductase"/>
    <property type="match status" value="1"/>
</dbReference>
<feature type="chain" id="PRO_0000337030" description="Metallo-beta-lactamase domain-containing protein 1">
    <location>
        <begin position="1"/>
        <end position="233"/>
    </location>
</feature>
<feature type="binding site" evidence="1">
    <location>
        <position position="96"/>
    </location>
    <ligand>
        <name>Zn(2+)</name>
        <dbReference type="ChEBI" id="CHEBI:29105"/>
        <label>1</label>
    </ligand>
</feature>
<feature type="binding site" evidence="1">
    <location>
        <position position="98"/>
    </location>
    <ligand>
        <name>Zn(2+)</name>
        <dbReference type="ChEBI" id="CHEBI:29105"/>
        <label>1</label>
    </ligand>
</feature>
<feature type="binding site" evidence="1">
    <location>
        <position position="100"/>
    </location>
    <ligand>
        <name>Zn(2+)</name>
        <dbReference type="ChEBI" id="CHEBI:29105"/>
        <label>2</label>
    </ligand>
</feature>
<feature type="binding site" evidence="1">
    <location>
        <position position="101"/>
    </location>
    <ligand>
        <name>Zn(2+)</name>
        <dbReference type="ChEBI" id="CHEBI:29105"/>
        <label>2</label>
    </ligand>
</feature>
<feature type="binding site" evidence="1">
    <location>
        <position position="152"/>
    </location>
    <ligand>
        <name>Zn(2+)</name>
        <dbReference type="ChEBI" id="CHEBI:29105"/>
        <label>1</label>
    </ligand>
</feature>
<feature type="binding site" evidence="1">
    <location>
        <position position="174"/>
    </location>
    <ligand>
        <name>Zn(2+)</name>
        <dbReference type="ChEBI" id="CHEBI:29105"/>
        <label>1</label>
    </ligand>
</feature>
<feature type="binding site" evidence="1">
    <location>
        <position position="174"/>
    </location>
    <ligand>
        <name>Zn(2+)</name>
        <dbReference type="ChEBI" id="CHEBI:29105"/>
        <label>2</label>
    </ligand>
</feature>
<feature type="binding site" evidence="1">
    <location>
        <position position="213"/>
    </location>
    <ligand>
        <name>Zn(2+)</name>
        <dbReference type="ChEBI" id="CHEBI:29105"/>
        <label>2</label>
    </ligand>
</feature>
<gene>
    <name type="primary">mblac1</name>
</gene>
<comment type="function">
    <text evidence="1">Endoribonuclease that catalyzes the hydrolysis of histone-coding pre-mRNA 3'-end. Involved in histone pre-mRNA processing during the S-phase of the cell cycle, which is required for entering/progressing through S-phase. Cleaves histone pre-mRNA at a major and a minor cleavage site after the 5'-ACCCA-3' and the 5'-ACCCACA-3' sequence, respectively, and located downstream of the stem-loop. May require the presence of the HDE element located at the histone pre-RNA 3'-end to avoid non-specific cleavage.</text>
</comment>
<comment type="catalytic activity">
    <reaction evidence="1">
        <text>a ribonucleotidyl-ribonucleotide-RNA + H2O = a 3'-end ribonucleotide-RNA + a 5'-end 5'-phospho-ribonucleoside-RNA + H(+)</text>
        <dbReference type="Rhea" id="RHEA:68096"/>
        <dbReference type="Rhea" id="RHEA-COMP:15179"/>
        <dbReference type="Rhea" id="RHEA-COMP:17355"/>
        <dbReference type="Rhea" id="RHEA-COMP:17428"/>
        <dbReference type="ChEBI" id="CHEBI:15377"/>
        <dbReference type="ChEBI" id="CHEBI:15378"/>
        <dbReference type="ChEBI" id="CHEBI:74896"/>
        <dbReference type="ChEBI" id="CHEBI:138282"/>
        <dbReference type="ChEBI" id="CHEBI:173118"/>
    </reaction>
    <physiologicalReaction direction="left-to-right" evidence="1">
        <dbReference type="Rhea" id="RHEA:68097"/>
    </physiologicalReaction>
</comment>
<comment type="cofactor">
    <cofactor evidence="1">
        <name>Zn(2+)</name>
        <dbReference type="ChEBI" id="CHEBI:29105"/>
    </cofactor>
    <text evidence="1">Binds 2 Zn(2+) ions per subunit.</text>
</comment>
<comment type="subunit">
    <text evidence="1">Homodimer.</text>
</comment>
<comment type="subcellular location">
    <subcellularLocation>
        <location evidence="1">Cytoplasm</location>
        <location evidence="1">Cytosol</location>
    </subcellularLocation>
    <subcellularLocation>
        <location evidence="1">Nucleus</location>
    </subcellularLocation>
    <text evidence="1">Localizes in the nucleus during early S-phase of the cell cycle.</text>
</comment>
<comment type="domain">
    <text evidence="1">Contains four of the five characteristic MBL-fold metal-binding motifs, with two waters completing metal coordination.</text>
</comment>
<comment type="similarity">
    <text evidence="2">Belongs to the metallo-beta-lactamase superfamily. Glyoxalase II family.</text>
</comment>
<comment type="sequence caution" evidence="2">
    <conflict type="erroneous initiation">
        <sequence resource="EMBL-CDS" id="AAI00189"/>
    </conflict>
</comment>
<evidence type="ECO:0000250" key="1">
    <source>
        <dbReference type="UniProtKB" id="A4D2B0"/>
    </source>
</evidence>
<evidence type="ECO:0000305" key="2"/>
<organism>
    <name type="scientific">Xenopus laevis</name>
    <name type="common">African clawed frog</name>
    <dbReference type="NCBI Taxonomy" id="8355"/>
    <lineage>
        <taxon>Eukaryota</taxon>
        <taxon>Metazoa</taxon>
        <taxon>Chordata</taxon>
        <taxon>Craniata</taxon>
        <taxon>Vertebrata</taxon>
        <taxon>Euteleostomi</taxon>
        <taxon>Amphibia</taxon>
        <taxon>Batrachia</taxon>
        <taxon>Anura</taxon>
        <taxon>Pipoidea</taxon>
        <taxon>Pipidae</taxon>
        <taxon>Xenopodinae</taxon>
        <taxon>Xenopus</taxon>
        <taxon>Xenopus</taxon>
    </lineage>
</organism>
<name>MBLC1_XENLA</name>
<protein>
    <recommendedName>
        <fullName>Metallo-beta-lactamase domain-containing protein 1</fullName>
        <ecNumber evidence="1">3.1.27.-</ecNumber>
    </recommendedName>
    <alternativeName>
        <fullName evidence="1">Endoribonuclease MBLAC1</fullName>
    </alternativeName>
</protein>
<keyword id="KW-0963">Cytoplasm</keyword>
<keyword id="KW-0378">Hydrolase</keyword>
<keyword id="KW-0479">Metal-binding</keyword>
<keyword id="KW-0539">Nucleus</keyword>
<keyword id="KW-1185">Reference proteome</keyword>
<keyword id="KW-0862">Zinc</keyword>
<sequence length="233" mass="24765">MASLQANATSSLQYQTAPLESSHIPGSPHSVHVLLEGYSKDVGGDLFQADGSVTLIQGPLTVLVDTAGPWSRDSLLQSLQNQGVAPADVTHVICTHGHSDHVGNLNLFSHAEILVSYDLWRNGYYVAHDFRAGVPYVLPGGEGLEVVATPGHTGSDISLLVPGTSLGTVVVAGDLFEREGDGDSWQPLSEDPERQEDSRAAILKVADVIIPGHGPPFRVIKHGQLAQQETKNN</sequence>
<reference key="1">
    <citation type="submission" date="2005-08" db="EMBL/GenBank/DDBJ databases">
        <authorList>
            <consortium name="NIH - Xenopus Gene Collection (XGC) project"/>
        </authorList>
    </citation>
    <scope>NUCLEOTIDE SEQUENCE [LARGE SCALE MRNA]</scope>
    <source>
        <tissue>Embryo</tissue>
    </source>
</reference>
<accession>Q498J9</accession>